<proteinExistence type="inferred from homology"/>
<reference key="1">
    <citation type="journal article" date="2007" name="J. Bacteriol.">
        <title>Genome-wide transcriptional changes in Streptococcus gordonii in response to competence signaling peptide.</title>
        <authorList>
            <person name="Vickerman M.M."/>
            <person name="Iobst S."/>
            <person name="Jesionowski A.M."/>
            <person name="Gill S.R."/>
        </authorList>
    </citation>
    <scope>NUCLEOTIDE SEQUENCE [LARGE SCALE GENOMIC DNA]</scope>
    <source>
        <strain>Challis / ATCC 35105 / BCRC 15272 / CH1 / DL1 / V288</strain>
    </source>
</reference>
<evidence type="ECO:0000255" key="1">
    <source>
        <dbReference type="HAMAP-Rule" id="MF_01507"/>
    </source>
</evidence>
<sequence length="88" mass="10257">MGFTDETVRFNLDDSNKKEISETLTDVYTSLNEKGYNPINQIVGYVLSGDPAYVPRYNNARNQIRKYERDEIVEELVRYYLKGQGIDL</sequence>
<name>Y2042_STRGC</name>
<accession>A8AZT0</accession>
<gene>
    <name type="ordered locus">SGO_2042</name>
</gene>
<comment type="similarity">
    <text evidence="1">Belongs to the UPF0297 family.</text>
</comment>
<dbReference type="EMBL" id="CP000725">
    <property type="protein sequence ID" value="ABV09958.1"/>
    <property type="molecule type" value="Genomic_DNA"/>
</dbReference>
<dbReference type="RefSeq" id="WP_008809968.1">
    <property type="nucleotide sequence ID" value="NC_009785.1"/>
</dbReference>
<dbReference type="SMR" id="A8AZT0"/>
<dbReference type="STRING" id="467705.SGO_2042"/>
<dbReference type="KEGG" id="sgo:SGO_2042"/>
<dbReference type="eggNOG" id="COG4472">
    <property type="taxonomic scope" value="Bacteria"/>
</dbReference>
<dbReference type="HOGENOM" id="CLU_162466_0_0_9"/>
<dbReference type="Proteomes" id="UP000001131">
    <property type="component" value="Chromosome"/>
</dbReference>
<dbReference type="HAMAP" id="MF_01507">
    <property type="entry name" value="UPF0297"/>
    <property type="match status" value="1"/>
</dbReference>
<dbReference type="InterPro" id="IPR009309">
    <property type="entry name" value="IreB"/>
</dbReference>
<dbReference type="NCBIfam" id="NF003997">
    <property type="entry name" value="PRK05473.1"/>
    <property type="match status" value="1"/>
</dbReference>
<dbReference type="PANTHER" id="PTHR40067">
    <property type="entry name" value="UPF0297 PROTEIN YRZL"/>
    <property type="match status" value="1"/>
</dbReference>
<dbReference type="PANTHER" id="PTHR40067:SF1">
    <property type="entry name" value="UPF0297 PROTEIN YRZL"/>
    <property type="match status" value="1"/>
</dbReference>
<dbReference type="Pfam" id="PF06135">
    <property type="entry name" value="IreB"/>
    <property type="match status" value="1"/>
</dbReference>
<dbReference type="PIRSF" id="PIRSF037258">
    <property type="entry name" value="DUF965_bac"/>
    <property type="match status" value="1"/>
</dbReference>
<keyword id="KW-1185">Reference proteome</keyword>
<feature type="chain" id="PRO_1000087523" description="UPF0297 protein SGO_2042">
    <location>
        <begin position="1"/>
        <end position="88"/>
    </location>
</feature>
<protein>
    <recommendedName>
        <fullName evidence="1">UPF0297 protein SGO_2042</fullName>
    </recommendedName>
</protein>
<organism>
    <name type="scientific">Streptococcus gordonii (strain Challis / ATCC 35105 / BCRC 15272 / CH1 / DL1 / V288)</name>
    <dbReference type="NCBI Taxonomy" id="467705"/>
    <lineage>
        <taxon>Bacteria</taxon>
        <taxon>Bacillati</taxon>
        <taxon>Bacillota</taxon>
        <taxon>Bacilli</taxon>
        <taxon>Lactobacillales</taxon>
        <taxon>Streptococcaceae</taxon>
        <taxon>Streptococcus</taxon>
    </lineage>
</organism>